<keyword id="KW-0378">Hydrolase</keyword>
<keyword id="KW-0904">Protein phosphatase</keyword>
<keyword id="KW-1185">Reference proteome</keyword>
<dbReference type="EC" id="3.1.3.84"/>
<dbReference type="EMBL" id="DS027059">
    <property type="protein sequence ID" value="EAW07198.1"/>
    <property type="molecule type" value="Genomic_DNA"/>
</dbReference>
<dbReference type="RefSeq" id="XP_001268624.1">
    <property type="nucleotide sequence ID" value="XM_001268623.1"/>
</dbReference>
<dbReference type="SMR" id="A1CNH7"/>
<dbReference type="STRING" id="344612.A1CNH7"/>
<dbReference type="EnsemblFungi" id="EAW07198">
    <property type="protein sequence ID" value="EAW07198"/>
    <property type="gene ID" value="ACLA_019030"/>
</dbReference>
<dbReference type="GeneID" id="4701859"/>
<dbReference type="KEGG" id="act:ACLA_019030"/>
<dbReference type="VEuPathDB" id="FungiDB:ACLA_019030"/>
<dbReference type="eggNOG" id="ENOG502S60W">
    <property type="taxonomic scope" value="Eukaryota"/>
</dbReference>
<dbReference type="HOGENOM" id="CLU_054419_1_0_1"/>
<dbReference type="OMA" id="CQGSWGK"/>
<dbReference type="OrthoDB" id="2155246at2759"/>
<dbReference type="Proteomes" id="UP000006701">
    <property type="component" value="Unassembled WGS sequence"/>
</dbReference>
<dbReference type="GO" id="GO:0004721">
    <property type="term" value="F:phosphoprotein phosphatase activity"/>
    <property type="evidence" value="ECO:0007669"/>
    <property type="project" value="UniProtKB-KW"/>
</dbReference>
<dbReference type="GO" id="GO:0140291">
    <property type="term" value="P:peptidyl-glutamate ADP-deribosylation"/>
    <property type="evidence" value="ECO:0007669"/>
    <property type="project" value="TreeGrafter"/>
</dbReference>
<dbReference type="Gene3D" id="3.40.220.10">
    <property type="entry name" value="Leucine Aminopeptidase, subunit E, domain 1"/>
    <property type="match status" value="1"/>
</dbReference>
<dbReference type="InterPro" id="IPR050892">
    <property type="entry name" value="ADP-ribose_metab_enzymes"/>
</dbReference>
<dbReference type="InterPro" id="IPR002589">
    <property type="entry name" value="Macro_dom"/>
</dbReference>
<dbReference type="InterPro" id="IPR043472">
    <property type="entry name" value="Macro_dom-like"/>
</dbReference>
<dbReference type="PANTHER" id="PTHR12521:SF0">
    <property type="entry name" value="ADP-RIBOSE GLYCOHYDROLASE OARD1"/>
    <property type="match status" value="1"/>
</dbReference>
<dbReference type="PANTHER" id="PTHR12521">
    <property type="entry name" value="PROTEIN C6ORF130"/>
    <property type="match status" value="1"/>
</dbReference>
<dbReference type="Pfam" id="PF01661">
    <property type="entry name" value="Macro"/>
    <property type="match status" value="1"/>
</dbReference>
<dbReference type="SMART" id="SM00506">
    <property type="entry name" value="A1pp"/>
    <property type="match status" value="1"/>
</dbReference>
<dbReference type="SUPFAM" id="SSF52949">
    <property type="entry name" value="Macro domain-like"/>
    <property type="match status" value="1"/>
</dbReference>
<comment type="function">
    <text evidence="1">Highly specific phosphatase involved in the metabolism of ADP-ribose 1''-phosphate (Appr1p) which is produced as a consequence of tRNA splicing.</text>
</comment>
<comment type="catalytic activity">
    <reaction>
        <text>ADP-alpha-D-ribose 1''-phosphate + H2O = ADP-D-ribose + phosphate</text>
        <dbReference type="Rhea" id="RHEA:25029"/>
        <dbReference type="ChEBI" id="CHEBI:15377"/>
        <dbReference type="ChEBI" id="CHEBI:43474"/>
        <dbReference type="ChEBI" id="CHEBI:57967"/>
        <dbReference type="ChEBI" id="CHEBI:58753"/>
        <dbReference type="EC" id="3.1.3.84"/>
    </reaction>
</comment>
<comment type="similarity">
    <text evidence="2">Belongs to the POA1 family.</text>
</comment>
<reference key="1">
    <citation type="journal article" date="2008" name="PLoS Genet.">
        <title>Genomic islands in the pathogenic filamentous fungus Aspergillus fumigatus.</title>
        <authorList>
            <person name="Fedorova N.D."/>
            <person name="Khaldi N."/>
            <person name="Joardar V.S."/>
            <person name="Maiti R."/>
            <person name="Amedeo P."/>
            <person name="Anderson M.J."/>
            <person name="Crabtree J."/>
            <person name="Silva J.C."/>
            <person name="Badger J.H."/>
            <person name="Albarraq A."/>
            <person name="Angiuoli S."/>
            <person name="Bussey H."/>
            <person name="Bowyer P."/>
            <person name="Cotty P.J."/>
            <person name="Dyer P.S."/>
            <person name="Egan A."/>
            <person name="Galens K."/>
            <person name="Fraser-Liggett C.M."/>
            <person name="Haas B.J."/>
            <person name="Inman J.M."/>
            <person name="Kent R."/>
            <person name="Lemieux S."/>
            <person name="Malavazi I."/>
            <person name="Orvis J."/>
            <person name="Roemer T."/>
            <person name="Ronning C.M."/>
            <person name="Sundaram J.P."/>
            <person name="Sutton G."/>
            <person name="Turner G."/>
            <person name="Venter J.C."/>
            <person name="White O.R."/>
            <person name="Whitty B.R."/>
            <person name="Youngman P."/>
            <person name="Wolfe K.H."/>
            <person name="Goldman G.H."/>
            <person name="Wortman J.R."/>
            <person name="Jiang B."/>
            <person name="Denning D.W."/>
            <person name="Nierman W.C."/>
        </authorList>
    </citation>
    <scope>NUCLEOTIDE SEQUENCE [LARGE SCALE GENOMIC DNA]</scope>
    <source>
        <strain>ATCC 1007 / CBS 513.65 / DSM 816 / NCTC 3887 / NRRL 1 / QM 1276 / 107</strain>
    </source>
</reference>
<evidence type="ECO:0000250" key="1"/>
<evidence type="ECO:0000305" key="2"/>
<organism>
    <name type="scientific">Aspergillus clavatus (strain ATCC 1007 / CBS 513.65 / DSM 816 / NCTC 3887 / NRRL 1 / QM 1276 / 107)</name>
    <dbReference type="NCBI Taxonomy" id="344612"/>
    <lineage>
        <taxon>Eukaryota</taxon>
        <taxon>Fungi</taxon>
        <taxon>Dikarya</taxon>
        <taxon>Ascomycota</taxon>
        <taxon>Pezizomycotina</taxon>
        <taxon>Eurotiomycetes</taxon>
        <taxon>Eurotiomycetidae</taxon>
        <taxon>Eurotiales</taxon>
        <taxon>Aspergillaceae</taxon>
        <taxon>Aspergillus</taxon>
        <taxon>Aspergillus subgen. Fumigati</taxon>
    </lineage>
</organism>
<protein>
    <recommendedName>
        <fullName>ADP-ribose 1''-phosphate phosphatase</fullName>
        <ecNumber>3.1.3.84</ecNumber>
    </recommendedName>
</protein>
<sequence>MAHSPIHGRITETEGDLFDAPDGAALIHACNCQGSWGKGIAQAFKNKYPAAFTIYRAHCQNLLSKASYRTVNPVPDEGSLTGNSRKVRLPEGTALVIPPQEHDHMGRHKKHWIICLFTSRGFGRGVSSPAVIIQNTELAVVDMRRQIAELHAEEGLGGFSGELWSCRFNSGLFGVDWALSRKVLEDAGLEVTVVSPREG</sequence>
<proteinExistence type="inferred from homology"/>
<feature type="chain" id="PRO_0000324901" description="ADP-ribose 1''-phosphate phosphatase">
    <location>
        <begin position="1"/>
        <end position="199"/>
    </location>
</feature>
<feature type="domain" description="Macro">
    <location>
        <begin position="1"/>
        <end position="199"/>
    </location>
</feature>
<feature type="binding site" evidence="1">
    <location>
        <begin position="15"/>
        <end position="17"/>
    </location>
    <ligand>
        <name>substrate</name>
    </ligand>
</feature>
<feature type="binding site" evidence="1">
    <location>
        <begin position="29"/>
        <end position="31"/>
    </location>
    <ligand>
        <name>substrate</name>
    </ligand>
</feature>
<feature type="binding site" evidence="1">
    <location>
        <begin position="36"/>
        <end position="41"/>
    </location>
    <ligand>
        <name>substrate</name>
    </ligand>
</feature>
<feature type="binding site" evidence="1">
    <location>
        <begin position="168"/>
        <end position="174"/>
    </location>
    <ligand>
        <name>substrate</name>
    </ligand>
</feature>
<name>POA1_ASPCL</name>
<gene>
    <name type="primary">poa1</name>
    <name type="ORF">ACLA_019030</name>
</gene>
<accession>A1CNH7</accession>